<dbReference type="EMBL" id="CY014680">
    <property type="protein sequence ID" value="ABI84546.1"/>
    <property type="molecule type" value="Genomic_RNA"/>
</dbReference>
<dbReference type="SMR" id="Q0A435"/>
<dbReference type="Proteomes" id="UP000155465">
    <property type="component" value="Genome"/>
</dbReference>
<dbReference type="GO" id="GO:0042025">
    <property type="term" value="C:host cell nucleus"/>
    <property type="evidence" value="ECO:0007669"/>
    <property type="project" value="UniProtKB-SubCell"/>
</dbReference>
<dbReference type="GO" id="GO:0016020">
    <property type="term" value="C:membrane"/>
    <property type="evidence" value="ECO:0007669"/>
    <property type="project" value="UniProtKB-KW"/>
</dbReference>
<dbReference type="GO" id="GO:0055036">
    <property type="term" value="C:virion membrane"/>
    <property type="evidence" value="ECO:0007669"/>
    <property type="project" value="UniProtKB-SubCell"/>
</dbReference>
<dbReference type="GO" id="GO:0003723">
    <property type="term" value="F:RNA binding"/>
    <property type="evidence" value="ECO:0007669"/>
    <property type="project" value="UniProtKB-UniRule"/>
</dbReference>
<dbReference type="GO" id="GO:0039660">
    <property type="term" value="F:structural constituent of virion"/>
    <property type="evidence" value="ECO:0007669"/>
    <property type="project" value="UniProtKB-UniRule"/>
</dbReference>
<dbReference type="GO" id="GO:0046761">
    <property type="term" value="P:viral budding from plasma membrane"/>
    <property type="evidence" value="ECO:0007669"/>
    <property type="project" value="UniProtKB-UniRule"/>
</dbReference>
<dbReference type="FunFam" id="1.10.10.180:FF:000001">
    <property type="entry name" value="Matrix protein 1"/>
    <property type="match status" value="1"/>
</dbReference>
<dbReference type="FunFam" id="1.20.91.10:FF:000001">
    <property type="entry name" value="Matrix protein 1"/>
    <property type="match status" value="1"/>
</dbReference>
<dbReference type="Gene3D" id="1.10.10.180">
    <property type="match status" value="1"/>
</dbReference>
<dbReference type="Gene3D" id="1.20.91.10">
    <property type="match status" value="1"/>
</dbReference>
<dbReference type="HAMAP" id="MF_04068">
    <property type="entry name" value="INFV_M1"/>
    <property type="match status" value="1"/>
</dbReference>
<dbReference type="InterPro" id="IPR036039">
    <property type="entry name" value="Flu_matrix_M1"/>
</dbReference>
<dbReference type="InterPro" id="IPR013188">
    <property type="entry name" value="Flu_matrix_M1_C"/>
</dbReference>
<dbReference type="InterPro" id="IPR001561">
    <property type="entry name" value="Flu_matrix_M1_N"/>
</dbReference>
<dbReference type="InterPro" id="IPR015423">
    <property type="entry name" value="Flu_matrix_M1_N_sub1"/>
</dbReference>
<dbReference type="InterPro" id="IPR015799">
    <property type="entry name" value="Flu_matrix_M1_N_sub2"/>
</dbReference>
<dbReference type="InterPro" id="IPR037533">
    <property type="entry name" value="INFV_M1"/>
</dbReference>
<dbReference type="Pfam" id="PF00598">
    <property type="entry name" value="Flu_M1"/>
    <property type="match status" value="1"/>
</dbReference>
<dbReference type="Pfam" id="PF08289">
    <property type="entry name" value="Flu_M1_C"/>
    <property type="match status" value="1"/>
</dbReference>
<dbReference type="SMART" id="SM00759">
    <property type="entry name" value="Flu_M1_C"/>
    <property type="match status" value="1"/>
</dbReference>
<dbReference type="SUPFAM" id="SSF48145">
    <property type="entry name" value="Influenza virus matrix protein M1"/>
    <property type="match status" value="1"/>
</dbReference>
<comment type="function">
    <text evidence="1">Plays critical roles in virus replication, from virus entry and uncoating to assembly and budding of the virus particle. M1 binding to ribonucleocapsids (RNPs) in nucleus seems to inhibit viral transcription. Interaction of viral NEP with M1-RNP is thought to promote nuclear export of the complex, which is targeted to the virion assembly site at the apical plasma membrane in polarized epithelial cells. Interactions with NA and HA may bring M1, a non-raft-associated protein, into lipid rafts. Forms a continuous shell on the inner side of the lipid bilayer in virion, where it binds the RNP. During virus entry into cell, the M2 ion channel acidifies the internal virion core, inducing M1 dissociation from the RNP. M1-free RNPs are transported to the nucleus, where viral transcription and replication can take place.</text>
</comment>
<comment type="function">
    <text evidence="1">Determines the virion's shape: spherical or filamentous. Clinical isolates of influenza are characterized by the presence of significant proportion of filamentous virions, whereas after multiple passage on eggs or cell culture, virions have only spherical morphology. Filamentous virions are thought to be important to infect neighboring cells, and spherical virions more suited to spread through aerosol between hosts organisms.</text>
</comment>
<comment type="subunit">
    <text evidence="1">Homodimer and homomultimer. Interacts with NEP. Binds ribonucleocapsid by both interacting with genomic RNA and NP protein. May interact with HA and NA. Cannot bind NP without genomic RNA.</text>
</comment>
<comment type="subcellular location">
    <subcellularLocation>
        <location evidence="1">Virion membrane</location>
        <topology evidence="1">Peripheral membrane protein</topology>
        <orientation evidence="1">Cytoplasmic side</orientation>
    </subcellularLocation>
    <subcellularLocation>
        <location evidence="1">Host nucleus</location>
    </subcellularLocation>
</comment>
<comment type="alternative products">
    <event type="alternative splicing"/>
    <isoform>
        <id>Q0A435-1</id>
        <name>M1</name>
        <sequence type="displayed"/>
    </isoform>
    <isoform>
        <id>Q0A436-1</id>
        <name>M2</name>
        <sequence type="external"/>
    </isoform>
    <text>Only the first 9 residues are shared by the 2 isoforms.</text>
</comment>
<comment type="miscellaneous">
    <text evidence="1">Most abundant protein in virion. When expressed alone can form virus-like particles in transfected cells.</text>
</comment>
<comment type="similarity">
    <text evidence="1">Belongs to the influenza viruses Matrix protein M1 family.</text>
</comment>
<evidence type="ECO:0000255" key="1">
    <source>
        <dbReference type="HAMAP-Rule" id="MF_04068"/>
    </source>
</evidence>
<sequence length="252" mass="27868">MSLLTEVETYVLSIVPSGPLKAEIAQRLEDVFAGKNTDLEALMEWLKTRPILSPLTKGILGFVFTLTVPSERGLQRRRFVQNALNGNGDPNNMDRAVKLYRKLKREITFHGAKEVALSYSTGALASCMGLIYNRMGTVTTEAAFGLVCATCEQIADSQHRSHRQMVTTTNPLIRHENRMVLASTTAKAMEQMAGSSEQAAEAMEVASQARQMVQAMRTVGTHPSSSAGLKDDLLENLQAYQKRMGVQMQRFK</sequence>
<name>M1_I56A2</name>
<organismHost>
    <name type="scientific">Aves</name>
    <dbReference type="NCBI Taxonomy" id="8782"/>
</organismHost>
<protein>
    <recommendedName>
        <fullName evidence="1">Matrix protein 1</fullName>
        <shortName evidence="1">M1</shortName>
    </recommendedName>
</protein>
<feature type="chain" id="PRO_0000326280" description="Matrix protein 1">
    <location>
        <begin position="1"/>
        <end position="252"/>
    </location>
</feature>
<feature type="region of interest" description="Membrane-binding" evidence="1">
    <location>
        <begin position="1"/>
        <end position="164"/>
    </location>
</feature>
<feature type="region of interest" description="RNP-binding" evidence="1">
    <location>
        <begin position="165"/>
        <end position="252"/>
    </location>
</feature>
<feature type="short sequence motif" description="Nuclear localization signal" evidence="1">
    <location>
        <begin position="101"/>
        <end position="105"/>
    </location>
</feature>
<reference key="1">
    <citation type="journal article" date="2006" name="Science">
        <title>Large-scale sequence analysis of avian influenza isolates.</title>
        <authorList>
            <person name="Obenauer J.C."/>
            <person name="Denson J."/>
            <person name="Mehta P.K."/>
            <person name="Su X."/>
            <person name="Mukatira S."/>
            <person name="Finkelstein D.B."/>
            <person name="Xu X."/>
            <person name="Wang J."/>
            <person name="Ma J."/>
            <person name="Fan Y."/>
            <person name="Rakestraw K.M."/>
            <person name="Webster R.G."/>
            <person name="Hoffmann E."/>
            <person name="Krauss S."/>
            <person name="Zheng J."/>
            <person name="Zhang Z."/>
            <person name="Naeve C.W."/>
        </authorList>
    </citation>
    <scope>NUCLEOTIDE SEQUENCE [GENOMIC RNA]</scope>
</reference>
<proteinExistence type="inferred from homology"/>
<gene>
    <name evidence="1" type="primary">M</name>
</gene>
<organism>
    <name type="scientific">Influenza A virus (strain A/Duck/England/1/1956 H11N6)</name>
    <dbReference type="NCBI Taxonomy" id="383550"/>
    <lineage>
        <taxon>Viruses</taxon>
        <taxon>Riboviria</taxon>
        <taxon>Orthornavirae</taxon>
        <taxon>Negarnaviricota</taxon>
        <taxon>Polyploviricotina</taxon>
        <taxon>Insthoviricetes</taxon>
        <taxon>Articulavirales</taxon>
        <taxon>Orthomyxoviridae</taxon>
        <taxon>Alphainfluenzavirus</taxon>
        <taxon>Alphainfluenzavirus influenzae</taxon>
        <taxon>Influenza A virus</taxon>
    </lineage>
</organism>
<accession>Q0A435</accession>
<keyword id="KW-0025">Alternative splicing</keyword>
<keyword id="KW-1048">Host nucleus</keyword>
<keyword id="KW-0472">Membrane</keyword>
<keyword id="KW-0694">RNA-binding</keyword>
<keyword id="KW-0468">Viral matrix protein</keyword>
<keyword id="KW-0946">Virion</keyword>